<sequence>MTKNNEAGWNLDHSYTTLPQSFYTEIPPTPVSSPELVKLNHSLAISLGFNPEELKKEAEIAIFAGNALPEGAHPLAQAYAGHQFGHFNMLGDGRALLIGEQMTPSGKRFDIQLKGSGPTPYSRRGDGRAALGPMLREYIISEAMYALDIPTTRSLAVVTTGEPTYRETKLPGAILTRVASSHIRVGTFQYAAARGSIEDLQSLADYTIKRHYPEIEAHENRYTALLQEVIKKQASLIAKWQLVGFIHGVMNTDNITISGETIDYGPCAFMDNYDQGTVFSSIDTQGRYAYGNQPYMAAWDLARLAESLIPILHEDEEEVLKIAQDEISKFSVQYEKQWFLGMKKKLGLFSNEEQDQSLIEQLLKMMEKFKADYTNTFRSLTLNTIENTALFESPEFKEWYKLWQSRLERQEESKENAYEMMKNNNPSIIPRNHRVEEALEAAVTNGDYSVMEKLLEALSNPYAYATEQEEYCVPPVPTNRPYRTFCGT</sequence>
<name>SELO_BACAC</name>
<protein>
    <recommendedName>
        <fullName evidence="1">Protein nucleotidyltransferase YdiU</fullName>
        <ecNumber evidence="1">2.7.7.-</ecNumber>
    </recommendedName>
    <alternativeName>
        <fullName evidence="1">Protein adenylyltransferase YdiU</fullName>
        <ecNumber evidence="1">2.7.7.108</ecNumber>
    </alternativeName>
    <alternativeName>
        <fullName evidence="1">Protein uridylyltransferase YdiU</fullName>
        <ecNumber evidence="1">2.7.7.-</ecNumber>
    </alternativeName>
</protein>
<accession>C3LAB5</accession>
<feature type="chain" id="PRO_1000200055" description="Protein nucleotidyltransferase YdiU">
    <location>
        <begin position="1"/>
        <end position="488"/>
    </location>
</feature>
<feature type="region of interest" description="Disordered" evidence="2">
    <location>
        <begin position="108"/>
        <end position="127"/>
    </location>
</feature>
<feature type="active site" description="Proton acceptor" evidence="1">
    <location>
        <position position="253"/>
    </location>
</feature>
<feature type="binding site" evidence="1">
    <location>
        <position position="91"/>
    </location>
    <ligand>
        <name>ATP</name>
        <dbReference type="ChEBI" id="CHEBI:30616"/>
    </ligand>
</feature>
<feature type="binding site" evidence="1">
    <location>
        <position position="93"/>
    </location>
    <ligand>
        <name>ATP</name>
        <dbReference type="ChEBI" id="CHEBI:30616"/>
    </ligand>
</feature>
<feature type="binding site" evidence="1">
    <location>
        <position position="94"/>
    </location>
    <ligand>
        <name>ATP</name>
        <dbReference type="ChEBI" id="CHEBI:30616"/>
    </ligand>
</feature>
<feature type="binding site" evidence="1">
    <location>
        <position position="114"/>
    </location>
    <ligand>
        <name>ATP</name>
        <dbReference type="ChEBI" id="CHEBI:30616"/>
    </ligand>
</feature>
<feature type="binding site" evidence="1">
    <location>
        <position position="126"/>
    </location>
    <ligand>
        <name>ATP</name>
        <dbReference type="ChEBI" id="CHEBI:30616"/>
    </ligand>
</feature>
<feature type="binding site" evidence="1">
    <location>
        <position position="127"/>
    </location>
    <ligand>
        <name>ATP</name>
        <dbReference type="ChEBI" id="CHEBI:30616"/>
    </ligand>
</feature>
<feature type="binding site" evidence="1">
    <location>
        <position position="177"/>
    </location>
    <ligand>
        <name>ATP</name>
        <dbReference type="ChEBI" id="CHEBI:30616"/>
    </ligand>
</feature>
<feature type="binding site" evidence="1">
    <location>
        <position position="184"/>
    </location>
    <ligand>
        <name>ATP</name>
        <dbReference type="ChEBI" id="CHEBI:30616"/>
    </ligand>
</feature>
<feature type="binding site" evidence="1">
    <location>
        <position position="254"/>
    </location>
    <ligand>
        <name>Mg(2+)</name>
        <dbReference type="ChEBI" id="CHEBI:18420"/>
    </ligand>
</feature>
<feature type="binding site" evidence="1">
    <location>
        <position position="263"/>
    </location>
    <ligand>
        <name>ATP</name>
        <dbReference type="ChEBI" id="CHEBI:30616"/>
    </ligand>
</feature>
<feature type="binding site" evidence="1">
    <location>
        <position position="263"/>
    </location>
    <ligand>
        <name>Mg(2+)</name>
        <dbReference type="ChEBI" id="CHEBI:18420"/>
    </ligand>
</feature>
<proteinExistence type="inferred from homology"/>
<reference key="1">
    <citation type="submission" date="2008-10" db="EMBL/GenBank/DDBJ databases">
        <title>Genome sequence of Bacillus anthracis str. CDC 684.</title>
        <authorList>
            <person name="Dodson R.J."/>
            <person name="Munk A.C."/>
            <person name="Brettin T."/>
            <person name="Bruce D."/>
            <person name="Detter C."/>
            <person name="Tapia R."/>
            <person name="Han C."/>
            <person name="Sutton G."/>
            <person name="Sims D."/>
        </authorList>
    </citation>
    <scope>NUCLEOTIDE SEQUENCE [LARGE SCALE GENOMIC DNA]</scope>
    <source>
        <strain>CDC 684 / NRRL 3495</strain>
    </source>
</reference>
<evidence type="ECO:0000255" key="1">
    <source>
        <dbReference type="HAMAP-Rule" id="MF_00692"/>
    </source>
</evidence>
<evidence type="ECO:0000256" key="2">
    <source>
        <dbReference type="SAM" id="MobiDB-lite"/>
    </source>
</evidence>
<organism>
    <name type="scientific">Bacillus anthracis (strain CDC 684 / NRRL 3495)</name>
    <dbReference type="NCBI Taxonomy" id="568206"/>
    <lineage>
        <taxon>Bacteria</taxon>
        <taxon>Bacillati</taxon>
        <taxon>Bacillota</taxon>
        <taxon>Bacilli</taxon>
        <taxon>Bacillales</taxon>
        <taxon>Bacillaceae</taxon>
        <taxon>Bacillus</taxon>
        <taxon>Bacillus cereus group</taxon>
    </lineage>
</organism>
<dbReference type="EC" id="2.7.7.-" evidence="1"/>
<dbReference type="EC" id="2.7.7.108" evidence="1"/>
<dbReference type="EMBL" id="CP001215">
    <property type="protein sequence ID" value="ACP13346.1"/>
    <property type="molecule type" value="Genomic_DNA"/>
</dbReference>
<dbReference type="RefSeq" id="WP_000164886.1">
    <property type="nucleotide sequence ID" value="NC_012581.1"/>
</dbReference>
<dbReference type="SMR" id="C3LAB5"/>
<dbReference type="KEGG" id="bah:BAMEG_1065"/>
<dbReference type="HOGENOM" id="CLU_010245_4_1_9"/>
<dbReference type="GO" id="GO:0070733">
    <property type="term" value="F:AMPylase activity"/>
    <property type="evidence" value="ECO:0007669"/>
    <property type="project" value="RHEA"/>
</dbReference>
<dbReference type="GO" id="GO:0005524">
    <property type="term" value="F:ATP binding"/>
    <property type="evidence" value="ECO:0007669"/>
    <property type="project" value="UniProtKB-UniRule"/>
</dbReference>
<dbReference type="GO" id="GO:0000287">
    <property type="term" value="F:magnesium ion binding"/>
    <property type="evidence" value="ECO:0007669"/>
    <property type="project" value="UniProtKB-UniRule"/>
</dbReference>
<dbReference type="HAMAP" id="MF_00692">
    <property type="entry name" value="YdiU_SelO"/>
    <property type="match status" value="1"/>
</dbReference>
<dbReference type="InterPro" id="IPR003846">
    <property type="entry name" value="SelO"/>
</dbReference>
<dbReference type="NCBIfam" id="NF000658">
    <property type="entry name" value="PRK00029.1"/>
    <property type="match status" value="1"/>
</dbReference>
<dbReference type="PANTHER" id="PTHR32057">
    <property type="entry name" value="PROTEIN ADENYLYLTRANSFERASE SELO, MITOCHONDRIAL"/>
    <property type="match status" value="1"/>
</dbReference>
<dbReference type="PANTHER" id="PTHR32057:SF14">
    <property type="entry name" value="PROTEIN ADENYLYLTRANSFERASE SELO, MITOCHONDRIAL"/>
    <property type="match status" value="1"/>
</dbReference>
<dbReference type="Pfam" id="PF02696">
    <property type="entry name" value="SelO"/>
    <property type="match status" value="1"/>
</dbReference>
<comment type="function">
    <text evidence="1">Nucleotidyltransferase involved in the post-translational modification of proteins. It can catalyze the addition of adenosine monophosphate (AMP) or uridine monophosphate (UMP) to a protein, resulting in modifications known as AMPylation and UMPylation.</text>
</comment>
<comment type="catalytic activity">
    <reaction evidence="1">
        <text>L-seryl-[protein] + ATP = 3-O-(5'-adenylyl)-L-seryl-[protein] + diphosphate</text>
        <dbReference type="Rhea" id="RHEA:58120"/>
        <dbReference type="Rhea" id="RHEA-COMP:9863"/>
        <dbReference type="Rhea" id="RHEA-COMP:15073"/>
        <dbReference type="ChEBI" id="CHEBI:29999"/>
        <dbReference type="ChEBI" id="CHEBI:30616"/>
        <dbReference type="ChEBI" id="CHEBI:33019"/>
        <dbReference type="ChEBI" id="CHEBI:142516"/>
        <dbReference type="EC" id="2.7.7.108"/>
    </reaction>
</comment>
<comment type="catalytic activity">
    <reaction evidence="1">
        <text>L-threonyl-[protein] + ATP = 3-O-(5'-adenylyl)-L-threonyl-[protein] + diphosphate</text>
        <dbReference type="Rhea" id="RHEA:54292"/>
        <dbReference type="Rhea" id="RHEA-COMP:11060"/>
        <dbReference type="Rhea" id="RHEA-COMP:13847"/>
        <dbReference type="ChEBI" id="CHEBI:30013"/>
        <dbReference type="ChEBI" id="CHEBI:30616"/>
        <dbReference type="ChEBI" id="CHEBI:33019"/>
        <dbReference type="ChEBI" id="CHEBI:138113"/>
        <dbReference type="EC" id="2.7.7.108"/>
    </reaction>
</comment>
<comment type="catalytic activity">
    <reaction evidence="1">
        <text>L-tyrosyl-[protein] + ATP = O-(5'-adenylyl)-L-tyrosyl-[protein] + diphosphate</text>
        <dbReference type="Rhea" id="RHEA:54288"/>
        <dbReference type="Rhea" id="RHEA-COMP:10136"/>
        <dbReference type="Rhea" id="RHEA-COMP:13846"/>
        <dbReference type="ChEBI" id="CHEBI:30616"/>
        <dbReference type="ChEBI" id="CHEBI:33019"/>
        <dbReference type="ChEBI" id="CHEBI:46858"/>
        <dbReference type="ChEBI" id="CHEBI:83624"/>
        <dbReference type="EC" id="2.7.7.108"/>
    </reaction>
</comment>
<comment type="catalytic activity">
    <reaction evidence="1">
        <text>L-histidyl-[protein] + UTP = N(tele)-(5'-uridylyl)-L-histidyl-[protein] + diphosphate</text>
        <dbReference type="Rhea" id="RHEA:83891"/>
        <dbReference type="Rhea" id="RHEA-COMP:9745"/>
        <dbReference type="Rhea" id="RHEA-COMP:20239"/>
        <dbReference type="ChEBI" id="CHEBI:29979"/>
        <dbReference type="ChEBI" id="CHEBI:33019"/>
        <dbReference type="ChEBI" id="CHEBI:46398"/>
        <dbReference type="ChEBI" id="CHEBI:233474"/>
    </reaction>
</comment>
<comment type="catalytic activity">
    <reaction evidence="1">
        <text>L-seryl-[protein] + UTP = O-(5'-uridylyl)-L-seryl-[protein] + diphosphate</text>
        <dbReference type="Rhea" id="RHEA:64604"/>
        <dbReference type="Rhea" id="RHEA-COMP:9863"/>
        <dbReference type="Rhea" id="RHEA-COMP:16635"/>
        <dbReference type="ChEBI" id="CHEBI:29999"/>
        <dbReference type="ChEBI" id="CHEBI:33019"/>
        <dbReference type="ChEBI" id="CHEBI:46398"/>
        <dbReference type="ChEBI" id="CHEBI:156051"/>
    </reaction>
</comment>
<comment type="catalytic activity">
    <reaction evidence="1">
        <text>L-tyrosyl-[protein] + UTP = O-(5'-uridylyl)-L-tyrosyl-[protein] + diphosphate</text>
        <dbReference type="Rhea" id="RHEA:83887"/>
        <dbReference type="Rhea" id="RHEA-COMP:10136"/>
        <dbReference type="Rhea" id="RHEA-COMP:20238"/>
        <dbReference type="ChEBI" id="CHEBI:33019"/>
        <dbReference type="ChEBI" id="CHEBI:46398"/>
        <dbReference type="ChEBI" id="CHEBI:46858"/>
        <dbReference type="ChEBI" id="CHEBI:90602"/>
    </reaction>
</comment>
<comment type="cofactor">
    <cofactor evidence="1">
        <name>Mg(2+)</name>
        <dbReference type="ChEBI" id="CHEBI:18420"/>
    </cofactor>
    <cofactor evidence="1">
        <name>Mn(2+)</name>
        <dbReference type="ChEBI" id="CHEBI:29035"/>
    </cofactor>
</comment>
<comment type="similarity">
    <text evidence="1">Belongs to the SELO family.</text>
</comment>
<keyword id="KW-0067">ATP-binding</keyword>
<keyword id="KW-0460">Magnesium</keyword>
<keyword id="KW-0464">Manganese</keyword>
<keyword id="KW-0479">Metal-binding</keyword>
<keyword id="KW-0547">Nucleotide-binding</keyword>
<keyword id="KW-0548">Nucleotidyltransferase</keyword>
<keyword id="KW-0808">Transferase</keyword>
<gene>
    <name evidence="1" type="primary">ydiU</name>
    <name evidence="1" type="synonym">selO</name>
    <name type="ordered locus">BAMEG_1065</name>
</gene>